<evidence type="ECO:0000250" key="1"/>
<evidence type="ECO:0000305" key="2"/>
<proteinExistence type="evidence at protein level"/>
<protein>
    <recommendedName>
        <fullName>Subtilisin inhibitor-like protein 5</fullName>
        <shortName>SIL-5</shortName>
        <shortName>SIL5</shortName>
    </recommendedName>
</protein>
<keyword id="KW-0903">Direct protein sequencing</keyword>
<keyword id="KW-1015">Disulfide bond</keyword>
<keyword id="KW-0646">Protease inhibitor</keyword>
<keyword id="KW-0964">Secreted</keyword>
<keyword id="KW-0722">Serine protease inhibitor</keyword>
<accession>Q9R643</accession>
<accession>Q9R5B6</accession>
<organism>
    <name type="scientific">Streptomyces fradiae</name>
    <name type="common">Streptomyces roseoflavus</name>
    <dbReference type="NCBI Taxonomy" id="1906"/>
    <lineage>
        <taxon>Bacteria</taxon>
        <taxon>Bacillati</taxon>
        <taxon>Actinomycetota</taxon>
        <taxon>Actinomycetes</taxon>
        <taxon>Kitasatosporales</taxon>
        <taxon>Streptomycetaceae</taxon>
        <taxon>Streptomyces</taxon>
    </lineage>
</organism>
<comment type="function">
    <text>Strong inhibitory activity toward subtilisin BPN' and, to a lesser extent, toward trypsin.</text>
</comment>
<comment type="subunit">
    <text>Homodimer.</text>
</comment>
<comment type="subcellular location">
    <subcellularLocation>
        <location>Secreted</location>
    </subcellularLocation>
</comment>
<comment type="similarity">
    <text evidence="2">Belongs to the protease inhibitor I16 (SSI) family.</text>
</comment>
<sequence>HAPNALVLTVAKGETARTATPLRAVTLTCAPTPGGTHPAPEAACAELRAVDGRFSALRGDQDRACIKIYDPLVVTAEGVWEGQRVRYERTFGNSCTLQTEAGPVFSF</sequence>
<name>SSI5_STRFR</name>
<reference key="1">
    <citation type="journal article" date="1996" name="Biochim. Biophys. Acta">
        <title>New subtilisin-trypsin inhibitors produced by Streptomyces: primary structures and their relationship to other proteinase inhibitors from Streptomyces.</title>
        <authorList>
            <person name="Terabe M."/>
            <person name="Kojima S."/>
            <person name="Taguchi S."/>
            <person name="Momose H."/>
            <person name="Miura K."/>
        </authorList>
    </citation>
    <scope>PROTEIN SEQUENCE</scope>
    <scope>CHARACTERIZATION</scope>
    <source>
        <strain>Y059</strain>
    </source>
</reference>
<reference key="2">
    <citation type="journal article" date="1993" name="Biosci. Biotechnol. Biochem.">
        <title>High frequency of SSI-like protease inhibitors among Streptomyces.</title>
        <authorList>
            <person name="Taguchi S."/>
            <person name="Kikuchi H."/>
            <person name="Kojima S."/>
            <person name="Kumagai I."/>
            <person name="Nakase T."/>
            <person name="Miura K."/>
            <person name="Momose H."/>
        </authorList>
    </citation>
    <scope>PROTEIN SEQUENCE OF 1-31</scope>
</reference>
<dbReference type="PIR" id="PC1269">
    <property type="entry name" value="PC1269"/>
</dbReference>
<dbReference type="PIR" id="S65718">
    <property type="entry name" value="S65718"/>
</dbReference>
<dbReference type="SMR" id="Q9R643"/>
<dbReference type="MEROPS" id="I16.010"/>
<dbReference type="GO" id="GO:0005576">
    <property type="term" value="C:extracellular region"/>
    <property type="evidence" value="ECO:0007669"/>
    <property type="project" value="UniProtKB-SubCell"/>
</dbReference>
<dbReference type="GO" id="GO:0004867">
    <property type="term" value="F:serine-type endopeptidase inhibitor activity"/>
    <property type="evidence" value="ECO:0007669"/>
    <property type="project" value="UniProtKB-UniRule"/>
</dbReference>
<dbReference type="Gene3D" id="3.30.350.10">
    <property type="entry name" value="Subtilisin inhibitor-like"/>
    <property type="match status" value="1"/>
</dbReference>
<dbReference type="HAMAP" id="MF_00778">
    <property type="entry name" value="SSI"/>
    <property type="match status" value="1"/>
</dbReference>
<dbReference type="InterPro" id="IPR000691">
    <property type="entry name" value="Prot_inh_I16_SSI"/>
</dbReference>
<dbReference type="InterPro" id="IPR020054">
    <property type="entry name" value="Prot_inh_SSI_I16_CS"/>
</dbReference>
<dbReference type="InterPro" id="IPR023549">
    <property type="entry name" value="Subtilisin_inhibitor"/>
</dbReference>
<dbReference type="InterPro" id="IPR036819">
    <property type="entry name" value="Subtilisin_inhibitor-like_sf"/>
</dbReference>
<dbReference type="Pfam" id="PF00720">
    <property type="entry name" value="SSI"/>
    <property type="match status" value="1"/>
</dbReference>
<dbReference type="PRINTS" id="PR00294">
    <property type="entry name" value="SSBTLNINHBTR"/>
</dbReference>
<dbReference type="SUPFAM" id="SSF55399">
    <property type="entry name" value="Subtilisin inhibitor"/>
    <property type="match status" value="1"/>
</dbReference>
<dbReference type="PROSITE" id="PS00999">
    <property type="entry name" value="SSI"/>
    <property type="match status" value="1"/>
</dbReference>
<feature type="chain" id="PRO_0000208661" description="Subtilisin inhibitor-like protein 5">
    <location>
        <begin position="1"/>
        <end position="107"/>
    </location>
</feature>
<feature type="site" description="Reactive bond" evidence="1">
    <location>
        <begin position="67"/>
        <end position="68"/>
    </location>
</feature>
<feature type="disulfide bond" evidence="1">
    <location>
        <begin position="29"/>
        <end position="44"/>
    </location>
</feature>
<feature type="disulfide bond" evidence="1">
    <location>
        <begin position="65"/>
        <end position="95"/>
    </location>
</feature>